<name>CRYAB_RABIT</name>
<dbReference type="EMBL" id="X95383">
    <property type="protein sequence ID" value="CAA64669.1"/>
    <property type="molecule type" value="mRNA"/>
</dbReference>
<dbReference type="PIR" id="A53871">
    <property type="entry name" value="A53871"/>
</dbReference>
<dbReference type="RefSeq" id="NP_001075876.1">
    <property type="nucleotide sequence ID" value="NM_001082407.1"/>
</dbReference>
<dbReference type="RefSeq" id="XP_069926555.1">
    <property type="nucleotide sequence ID" value="XM_070070454.1"/>
</dbReference>
<dbReference type="RefSeq" id="XP_069926578.1">
    <property type="nucleotide sequence ID" value="XM_070070477.1"/>
</dbReference>
<dbReference type="RefSeq" id="XP_069926611.1">
    <property type="nucleotide sequence ID" value="XM_070070510.1"/>
</dbReference>
<dbReference type="RefSeq" id="XP_069926689.1">
    <property type="nucleotide sequence ID" value="XM_070070588.1"/>
</dbReference>
<dbReference type="BMRB" id="P41316"/>
<dbReference type="SMR" id="P41316"/>
<dbReference type="FunCoup" id="P41316">
    <property type="interactions" value="81"/>
</dbReference>
<dbReference type="STRING" id="9986.ENSOCUP00000011163"/>
<dbReference type="GlyCosmos" id="P41316">
    <property type="glycosylation" value="1 site, No reported glycans"/>
</dbReference>
<dbReference type="iPTMnet" id="P41316"/>
<dbReference type="PaxDb" id="9986-ENSOCUP00000011163"/>
<dbReference type="Ensembl" id="ENSOCUT00000012969.3">
    <property type="protein sequence ID" value="ENSOCUP00000011163.3"/>
    <property type="gene ID" value="ENSOCUG00000012972.3"/>
</dbReference>
<dbReference type="GeneID" id="100009295"/>
<dbReference type="KEGG" id="ocu:100009295"/>
<dbReference type="CTD" id="1410"/>
<dbReference type="eggNOG" id="KOG3591">
    <property type="taxonomic scope" value="Eukaryota"/>
</dbReference>
<dbReference type="GeneTree" id="ENSGT00940000157434"/>
<dbReference type="InParanoid" id="P41316"/>
<dbReference type="OMA" id="FRDWWED"/>
<dbReference type="OrthoDB" id="1431247at2759"/>
<dbReference type="Proteomes" id="UP000001811">
    <property type="component" value="Chromosome 1"/>
</dbReference>
<dbReference type="Bgee" id="ENSOCUG00000012972">
    <property type="expression patterns" value="Expressed in heart and 15 other cell types or tissues"/>
</dbReference>
<dbReference type="ExpressionAtlas" id="P41316">
    <property type="expression patterns" value="baseline"/>
</dbReference>
<dbReference type="GO" id="GO:0005737">
    <property type="term" value="C:cytoplasm"/>
    <property type="evidence" value="ECO:0000250"/>
    <property type="project" value="UniProtKB"/>
</dbReference>
<dbReference type="GO" id="GO:0005829">
    <property type="term" value="C:cytosol"/>
    <property type="evidence" value="ECO:0007669"/>
    <property type="project" value="Ensembl"/>
</dbReference>
<dbReference type="GO" id="GO:0005576">
    <property type="term" value="C:extracellular region"/>
    <property type="evidence" value="ECO:0007669"/>
    <property type="project" value="UniProtKB-SubCell"/>
</dbReference>
<dbReference type="GO" id="GO:0005764">
    <property type="term" value="C:lysosome"/>
    <property type="evidence" value="ECO:0007669"/>
    <property type="project" value="UniProtKB-SubCell"/>
</dbReference>
<dbReference type="GO" id="GO:0005739">
    <property type="term" value="C:mitochondrion"/>
    <property type="evidence" value="ECO:0007669"/>
    <property type="project" value="Ensembl"/>
</dbReference>
<dbReference type="GO" id="GO:0005634">
    <property type="term" value="C:nucleus"/>
    <property type="evidence" value="ECO:0000250"/>
    <property type="project" value="UniProtKB"/>
</dbReference>
<dbReference type="GO" id="GO:0005886">
    <property type="term" value="C:plasma membrane"/>
    <property type="evidence" value="ECO:0007669"/>
    <property type="project" value="Ensembl"/>
</dbReference>
<dbReference type="GO" id="GO:0032991">
    <property type="term" value="C:protein-containing complex"/>
    <property type="evidence" value="ECO:0000250"/>
    <property type="project" value="UniProtKB"/>
</dbReference>
<dbReference type="GO" id="GO:0030018">
    <property type="term" value="C:Z disc"/>
    <property type="evidence" value="ECO:0007669"/>
    <property type="project" value="Ensembl"/>
</dbReference>
<dbReference type="GO" id="GO:0001540">
    <property type="term" value="F:amyloid-beta binding"/>
    <property type="evidence" value="ECO:0007669"/>
    <property type="project" value="Ensembl"/>
</dbReference>
<dbReference type="GO" id="GO:0046872">
    <property type="term" value="F:metal ion binding"/>
    <property type="evidence" value="ECO:0007669"/>
    <property type="project" value="UniProtKB-KW"/>
</dbReference>
<dbReference type="GO" id="GO:0042803">
    <property type="term" value="F:protein homodimerization activity"/>
    <property type="evidence" value="ECO:0000250"/>
    <property type="project" value="UniProtKB"/>
</dbReference>
<dbReference type="GO" id="GO:0044877">
    <property type="term" value="F:protein-containing complex binding"/>
    <property type="evidence" value="ECO:0007669"/>
    <property type="project" value="Ensembl"/>
</dbReference>
<dbReference type="GO" id="GO:0005212">
    <property type="term" value="F:structural constituent of eye lens"/>
    <property type="evidence" value="ECO:0007669"/>
    <property type="project" value="UniProtKB-KW"/>
</dbReference>
<dbReference type="GO" id="GO:0051082">
    <property type="term" value="F:unfolded protein binding"/>
    <property type="evidence" value="ECO:0007669"/>
    <property type="project" value="Ensembl"/>
</dbReference>
<dbReference type="GO" id="GO:0060561">
    <property type="term" value="P:apoptotic process involved in morphogenesis"/>
    <property type="evidence" value="ECO:0007669"/>
    <property type="project" value="Ensembl"/>
</dbReference>
<dbReference type="GO" id="GO:0071480">
    <property type="term" value="P:cellular response to gamma radiation"/>
    <property type="evidence" value="ECO:0007669"/>
    <property type="project" value="Ensembl"/>
</dbReference>
<dbReference type="GO" id="GO:0002088">
    <property type="term" value="P:lens development in camera-type eye"/>
    <property type="evidence" value="ECO:0007669"/>
    <property type="project" value="Ensembl"/>
</dbReference>
<dbReference type="GO" id="GO:0007517">
    <property type="term" value="P:muscle organ development"/>
    <property type="evidence" value="ECO:0007669"/>
    <property type="project" value="Ensembl"/>
</dbReference>
<dbReference type="GO" id="GO:1905907">
    <property type="term" value="P:negative regulation of amyloid fibril formation"/>
    <property type="evidence" value="ECO:0007669"/>
    <property type="project" value="Ensembl"/>
</dbReference>
<dbReference type="GO" id="GO:0043066">
    <property type="term" value="P:negative regulation of apoptotic process"/>
    <property type="evidence" value="ECO:0007669"/>
    <property type="project" value="Ensembl"/>
</dbReference>
<dbReference type="GO" id="GO:0045892">
    <property type="term" value="P:negative regulation of DNA-templated transcription"/>
    <property type="evidence" value="ECO:0000250"/>
    <property type="project" value="UniProtKB"/>
</dbReference>
<dbReference type="GO" id="GO:0010629">
    <property type="term" value="P:negative regulation of gene expression"/>
    <property type="evidence" value="ECO:0007669"/>
    <property type="project" value="Ensembl"/>
</dbReference>
<dbReference type="GO" id="GO:0032387">
    <property type="term" value="P:negative regulation of intracellular transport"/>
    <property type="evidence" value="ECO:0007669"/>
    <property type="project" value="Ensembl"/>
</dbReference>
<dbReference type="GO" id="GO:0031333">
    <property type="term" value="P:negative regulation of protein-containing complex assembly"/>
    <property type="evidence" value="ECO:0007669"/>
    <property type="project" value="Ensembl"/>
</dbReference>
<dbReference type="GO" id="GO:0042026">
    <property type="term" value="P:protein refolding"/>
    <property type="evidence" value="ECO:0007669"/>
    <property type="project" value="TreeGrafter"/>
</dbReference>
<dbReference type="GO" id="GO:0050821">
    <property type="term" value="P:protein stabilization"/>
    <property type="evidence" value="ECO:0007669"/>
    <property type="project" value="Ensembl"/>
</dbReference>
<dbReference type="GO" id="GO:0009408">
    <property type="term" value="P:response to heat"/>
    <property type="evidence" value="ECO:0007669"/>
    <property type="project" value="TreeGrafter"/>
</dbReference>
<dbReference type="GO" id="GO:0042542">
    <property type="term" value="P:response to hydrogen peroxide"/>
    <property type="evidence" value="ECO:0007669"/>
    <property type="project" value="Ensembl"/>
</dbReference>
<dbReference type="GO" id="GO:0001666">
    <property type="term" value="P:response to hypoxia"/>
    <property type="evidence" value="ECO:0007669"/>
    <property type="project" value="Ensembl"/>
</dbReference>
<dbReference type="GO" id="GO:0007021">
    <property type="term" value="P:tubulin complex assembly"/>
    <property type="evidence" value="ECO:0007669"/>
    <property type="project" value="Ensembl"/>
</dbReference>
<dbReference type="CDD" id="cd06498">
    <property type="entry name" value="ACD_alphaB-crystallin_HspB5"/>
    <property type="match status" value="1"/>
</dbReference>
<dbReference type="FunFam" id="2.60.40.790:FF:000011">
    <property type="entry name" value="Alpha-crystallin B chain"/>
    <property type="match status" value="1"/>
</dbReference>
<dbReference type="Gene3D" id="2.60.40.790">
    <property type="match status" value="1"/>
</dbReference>
<dbReference type="InterPro" id="IPR002068">
    <property type="entry name" value="A-crystallin/Hsp20_dom"/>
</dbReference>
<dbReference type="InterPro" id="IPR037882">
    <property type="entry name" value="ACD_alphaB-crystallin"/>
</dbReference>
<dbReference type="InterPro" id="IPR055269">
    <property type="entry name" value="Alpha-crystallin/HSP_16"/>
</dbReference>
<dbReference type="InterPro" id="IPR001436">
    <property type="entry name" value="Alpha-crystallin/sHSP_animal"/>
</dbReference>
<dbReference type="InterPro" id="IPR003090">
    <property type="entry name" value="Alpha-crystallin_N"/>
</dbReference>
<dbReference type="InterPro" id="IPR008978">
    <property type="entry name" value="HSP20-like_chaperone"/>
</dbReference>
<dbReference type="PANTHER" id="PTHR45640:SF5">
    <property type="entry name" value="ALPHA-CRYSTALLIN B CHAIN"/>
    <property type="match status" value="1"/>
</dbReference>
<dbReference type="PANTHER" id="PTHR45640">
    <property type="entry name" value="HEAT SHOCK PROTEIN HSP-12.2-RELATED"/>
    <property type="match status" value="1"/>
</dbReference>
<dbReference type="Pfam" id="PF00525">
    <property type="entry name" value="Crystallin"/>
    <property type="match status" value="1"/>
</dbReference>
<dbReference type="Pfam" id="PF00011">
    <property type="entry name" value="HSP20"/>
    <property type="match status" value="1"/>
</dbReference>
<dbReference type="PIRSF" id="PIRSF036514">
    <property type="entry name" value="Sm_HSP_B1"/>
    <property type="match status" value="1"/>
</dbReference>
<dbReference type="PRINTS" id="PR00299">
    <property type="entry name" value="ACRYSTALLIN"/>
</dbReference>
<dbReference type="SUPFAM" id="SSF49764">
    <property type="entry name" value="HSP20-like chaperones"/>
    <property type="match status" value="1"/>
</dbReference>
<dbReference type="PROSITE" id="PS01031">
    <property type="entry name" value="SHSP"/>
    <property type="match status" value="1"/>
</dbReference>
<comment type="function">
    <text evidence="4">May contribute to the transparency and refractive index of the lens. Has chaperone-like activity, preventing aggregation of various proteins under a wide range of stress conditions. In lens epithelial cells, stabilizes the ATP6V1A protein, preventing its degradation by the proteasome (By similarity).</text>
</comment>
<comment type="subunit">
    <text evidence="3 4">Heteromer composed of three CRYAA and one CRYAB subunits. Aggregates with homologous proteins, including the small heat shock protein HSPB1, to form large heteromeric complexes. Inter-subunit bridging via zinc ions enhances stability, which is crucial as there is no protein turn over in the lens. Interacts with HSPBAP1 and TTN/titin. Interacts with TMEM109; in the cellular response to DNA damage. Interacts with DES; binds rapidly during early stages of DES filament assembly and a reduced binding seen in the later stages. Interacts with TMED10; the interaction mediates the translocation from the cytoplasm into the ERGIC (endoplasmic reticulum-Golgi intermediate compartment) and thereby secretion. Interacts with ATP6V1A and with MTOR, forming a ternary complex (By similarity).</text>
</comment>
<comment type="subcellular location">
    <subcellularLocation>
        <location evidence="3">Cytoplasm</location>
    </subcellularLocation>
    <subcellularLocation>
        <location evidence="3">Nucleus</location>
    </subcellularLocation>
    <subcellularLocation>
        <location evidence="3">Secreted</location>
    </subcellularLocation>
    <subcellularLocation>
        <location evidence="4">Lysosome</location>
    </subcellularLocation>
    <text evidence="3">Translocates to the nucleus during heat shock and resides in sub-nuclear structures known as SC35 speckles or nuclear splicing speckles. Localizes at the Z-bands and the intercalated disk in cardiomyocytes. Can be secreted; the secretion is dependent on protein unfolding and facilitated by the cargo receptor TMED10; it results in protein translocation from the cytoplasm into the ERGIC (endoplasmic reticulum-Golgi intermediate compartment) followed by vesicle entry and secretion.</text>
</comment>
<comment type="tissue specificity">
    <text>Lens as well as other tissues.</text>
</comment>
<comment type="similarity">
    <text evidence="6">Belongs to the small heat shock protein (HSP20) family.</text>
</comment>
<reference key="1">
    <citation type="journal article" date="1993" name="J. Protein Chem.">
        <title>Primary structure of rabbit lens alpha-crystallins.</title>
        <authorList>
            <person name="Parveen R."/>
            <person name="Smith J.B."/>
            <person name="Sun Y."/>
            <person name="Smith D.L."/>
        </authorList>
    </citation>
    <scope>PROTEIN SEQUENCE</scope>
    <scope>PHOSPHORYLATION AT SER-19; SER-45 AND SER-59</scope>
    <scope>IDENTIFICATION BY MASS SPECTROMETRY</scope>
    <source>
        <tissue>Lens</tissue>
    </source>
</reference>
<reference key="2">
    <citation type="journal article" date="1996" name="Invest. Ophthalmol. Vis. Sci.">
        <title>Expression of crystallins, Pax6, filensin, CP49, MIP, and MP20 in lens-derived cell lines.</title>
        <authorList>
            <person name="Krausz E."/>
            <person name="Augusteyn R.C."/>
            <person name="Quinlan R.A."/>
            <person name="Reddan J.R."/>
            <person name="Russell P."/>
            <person name="Sax C.M."/>
            <person name="Graw J."/>
        </authorList>
    </citation>
    <scope>NUCLEOTIDE SEQUENCE [MRNA]</scope>
    <source>
        <tissue>Lens</tissue>
    </source>
</reference>
<evidence type="ECO:0000250" key="1"/>
<evidence type="ECO:0000250" key="2">
    <source>
        <dbReference type="UniProtKB" id="P02510"/>
    </source>
</evidence>
<evidence type="ECO:0000250" key="3">
    <source>
        <dbReference type="UniProtKB" id="P02511"/>
    </source>
</evidence>
<evidence type="ECO:0000250" key="4">
    <source>
        <dbReference type="UniProtKB" id="P23927"/>
    </source>
</evidence>
<evidence type="ECO:0000250" key="5">
    <source>
        <dbReference type="UniProtKB" id="P23928"/>
    </source>
</evidence>
<evidence type="ECO:0000255" key="6">
    <source>
        <dbReference type="PROSITE-ProRule" id="PRU00285"/>
    </source>
</evidence>
<evidence type="ECO:0000256" key="7">
    <source>
        <dbReference type="SAM" id="MobiDB-lite"/>
    </source>
</evidence>
<evidence type="ECO:0000269" key="8">
    <source>
    </source>
</evidence>
<protein>
    <recommendedName>
        <fullName>Alpha-crystallin B chain</fullName>
    </recommendedName>
    <alternativeName>
        <fullName>Alpha(B)-crystallin</fullName>
    </alternativeName>
</protein>
<gene>
    <name type="primary">CRYAB</name>
</gene>
<sequence length="175" mass="20107">MDIAIHHPWIRRPFFPFHSPSRLFDQFFGEHLLESDLFPTSTSLSPFYLRPPSFLRAPSWIDTGLSEMRLEKDRFSVNLDVKHFSPEELKVKVLGDVIEVHGKHEERQDEHGFISREFHRKYRIPADVDPLTITSSLSSDGVLTVNGPRKQAPGPERTIPITREEKPAVTAAPKK</sequence>
<accession>P41316</accession>
<organism>
    <name type="scientific">Oryctolagus cuniculus</name>
    <name type="common">Rabbit</name>
    <dbReference type="NCBI Taxonomy" id="9986"/>
    <lineage>
        <taxon>Eukaryota</taxon>
        <taxon>Metazoa</taxon>
        <taxon>Chordata</taxon>
        <taxon>Craniata</taxon>
        <taxon>Vertebrata</taxon>
        <taxon>Euteleostomi</taxon>
        <taxon>Mammalia</taxon>
        <taxon>Eutheria</taxon>
        <taxon>Euarchontoglires</taxon>
        <taxon>Glires</taxon>
        <taxon>Lagomorpha</taxon>
        <taxon>Leporidae</taxon>
        <taxon>Oryctolagus</taxon>
    </lineage>
</organism>
<proteinExistence type="evidence at protein level"/>
<keyword id="KW-0007">Acetylation</keyword>
<keyword id="KW-0143">Chaperone</keyword>
<keyword id="KW-0963">Cytoplasm</keyword>
<keyword id="KW-0903">Direct protein sequencing</keyword>
<keyword id="KW-0273">Eye lens protein</keyword>
<keyword id="KW-0325">Glycoprotein</keyword>
<keyword id="KW-0458">Lysosome</keyword>
<keyword id="KW-0479">Metal-binding</keyword>
<keyword id="KW-0488">Methylation</keyword>
<keyword id="KW-0539">Nucleus</keyword>
<keyword id="KW-0597">Phosphoprotein</keyword>
<keyword id="KW-1185">Reference proteome</keyword>
<keyword id="KW-0964">Secreted</keyword>
<keyword id="KW-0862">Zinc</keyword>
<feature type="chain" id="PRO_0000125912" description="Alpha-crystallin B chain">
    <location>
        <begin position="1"/>
        <end position="175"/>
    </location>
</feature>
<feature type="domain" description="sHSP" evidence="6">
    <location>
        <begin position="56"/>
        <end position="164"/>
    </location>
</feature>
<feature type="region of interest" description="Disordered" evidence="7">
    <location>
        <begin position="142"/>
        <end position="175"/>
    </location>
</feature>
<feature type="binding site" evidence="1">
    <location>
        <position position="83"/>
    </location>
    <ligand>
        <name>Zn(2+)</name>
        <dbReference type="ChEBI" id="CHEBI:29105"/>
        <label>1</label>
    </ligand>
</feature>
<feature type="binding site" evidence="1">
    <location>
        <position position="104"/>
    </location>
    <ligand>
        <name>Zn(2+)</name>
        <dbReference type="ChEBI" id="CHEBI:29105"/>
        <label>2</label>
    </ligand>
</feature>
<feature type="binding site" evidence="1">
    <location>
        <position position="106"/>
    </location>
    <ligand>
        <name>Zn(2+)</name>
        <dbReference type="ChEBI" id="CHEBI:29105"/>
        <label>2</label>
    </ligand>
</feature>
<feature type="binding site" evidence="1">
    <location>
        <position position="111"/>
    </location>
    <ligand>
        <name>Zn(2+)</name>
        <dbReference type="ChEBI" id="CHEBI:29105"/>
        <label>1</label>
    </ligand>
</feature>
<feature type="binding site" evidence="1">
    <location>
        <position position="119"/>
    </location>
    <ligand>
        <name>Zn(2+)</name>
        <dbReference type="ChEBI" id="CHEBI:29105"/>
        <label>1</label>
    </ligand>
</feature>
<feature type="modified residue" description="N-acetylmethionine" evidence="2">
    <location>
        <position position="1"/>
    </location>
</feature>
<feature type="modified residue" description="Phosphoserine" evidence="8">
    <location>
        <position position="19"/>
    </location>
</feature>
<feature type="modified residue" description="Phosphoserine" evidence="8">
    <location>
        <position position="45"/>
    </location>
</feature>
<feature type="modified residue" description="Phosphoserine" evidence="8">
    <location>
        <position position="59"/>
    </location>
</feature>
<feature type="modified residue" description="N6-acetyllysine" evidence="3">
    <location>
        <position position="92"/>
    </location>
</feature>
<feature type="modified residue" description="N6-acetyllysine" evidence="3">
    <location>
        <position position="166"/>
    </location>
</feature>
<feature type="glycosylation site" description="O-linked (GlcNAc) serine" evidence="3">
    <location>
        <position position="41"/>
    </location>
</feature>
<feature type="glycosylation site" description="O-linked (GlcNAc) threonine" evidence="5">
    <location>
        <position position="170"/>
    </location>
</feature>